<dbReference type="EMBL" id="CU928158">
    <property type="protein sequence ID" value="CAQ90107.1"/>
    <property type="molecule type" value="Genomic_DNA"/>
</dbReference>
<dbReference type="RefSeq" id="WP_000543537.1">
    <property type="nucleotide sequence ID" value="NC_011740.1"/>
</dbReference>
<dbReference type="SMR" id="B7LMH4"/>
<dbReference type="GeneID" id="75056357"/>
<dbReference type="KEGG" id="efe:EFER_2612"/>
<dbReference type="HOGENOM" id="CLU_108412_0_0_6"/>
<dbReference type="OrthoDB" id="9807461at2"/>
<dbReference type="Proteomes" id="UP000000745">
    <property type="component" value="Chromosome"/>
</dbReference>
<dbReference type="GO" id="GO:0005524">
    <property type="term" value="F:ATP binding"/>
    <property type="evidence" value="ECO:0007669"/>
    <property type="project" value="UniProtKB-KW"/>
</dbReference>
<dbReference type="GO" id="GO:0003677">
    <property type="term" value="F:DNA binding"/>
    <property type="evidence" value="ECO:0007669"/>
    <property type="project" value="UniProtKB-KW"/>
</dbReference>
<dbReference type="GO" id="GO:0008270">
    <property type="term" value="F:zinc ion binding"/>
    <property type="evidence" value="ECO:0007669"/>
    <property type="project" value="UniProtKB-UniRule"/>
</dbReference>
<dbReference type="GO" id="GO:0045892">
    <property type="term" value="P:negative regulation of DNA-templated transcription"/>
    <property type="evidence" value="ECO:0007669"/>
    <property type="project" value="UniProtKB-UniRule"/>
</dbReference>
<dbReference type="HAMAP" id="MF_00440">
    <property type="entry name" value="NrdR"/>
    <property type="match status" value="1"/>
</dbReference>
<dbReference type="InterPro" id="IPR005144">
    <property type="entry name" value="ATP-cone_dom"/>
</dbReference>
<dbReference type="InterPro" id="IPR055173">
    <property type="entry name" value="NrdR-like_N"/>
</dbReference>
<dbReference type="InterPro" id="IPR003796">
    <property type="entry name" value="RNR_NrdR-like"/>
</dbReference>
<dbReference type="NCBIfam" id="TIGR00244">
    <property type="entry name" value="transcriptional regulator NrdR"/>
    <property type="match status" value="1"/>
</dbReference>
<dbReference type="PANTHER" id="PTHR30455">
    <property type="entry name" value="TRANSCRIPTIONAL REPRESSOR NRDR"/>
    <property type="match status" value="1"/>
</dbReference>
<dbReference type="PANTHER" id="PTHR30455:SF2">
    <property type="entry name" value="TRANSCRIPTIONAL REPRESSOR NRDR"/>
    <property type="match status" value="1"/>
</dbReference>
<dbReference type="Pfam" id="PF03477">
    <property type="entry name" value="ATP-cone"/>
    <property type="match status" value="1"/>
</dbReference>
<dbReference type="Pfam" id="PF22811">
    <property type="entry name" value="Zn_ribbon_NrdR"/>
    <property type="match status" value="1"/>
</dbReference>
<dbReference type="PROSITE" id="PS51161">
    <property type="entry name" value="ATP_CONE"/>
    <property type="match status" value="1"/>
</dbReference>
<gene>
    <name evidence="1" type="primary">nrdR</name>
    <name type="ordered locus">EFER_2612</name>
</gene>
<accession>B7LMH4</accession>
<comment type="function">
    <text evidence="1">Negatively regulates transcription of bacterial ribonucleotide reductase nrd genes and operons by binding to NrdR-boxes.</text>
</comment>
<comment type="cofactor">
    <cofactor evidence="1">
        <name>Zn(2+)</name>
        <dbReference type="ChEBI" id="CHEBI:29105"/>
    </cofactor>
    <text evidence="1">Binds 1 zinc ion.</text>
</comment>
<comment type="similarity">
    <text evidence="1">Belongs to the NrdR family.</text>
</comment>
<keyword id="KW-0067">ATP-binding</keyword>
<keyword id="KW-0238">DNA-binding</keyword>
<keyword id="KW-0479">Metal-binding</keyword>
<keyword id="KW-0547">Nucleotide-binding</keyword>
<keyword id="KW-0678">Repressor</keyword>
<keyword id="KW-0804">Transcription</keyword>
<keyword id="KW-0805">Transcription regulation</keyword>
<keyword id="KW-0862">Zinc</keyword>
<keyword id="KW-0863">Zinc-finger</keyword>
<organism>
    <name type="scientific">Escherichia fergusonii (strain ATCC 35469 / DSM 13698 / CCUG 18766 / IAM 14443 / JCM 21226 / LMG 7866 / NBRC 102419 / NCTC 12128 / CDC 0568-73)</name>
    <dbReference type="NCBI Taxonomy" id="585054"/>
    <lineage>
        <taxon>Bacteria</taxon>
        <taxon>Pseudomonadati</taxon>
        <taxon>Pseudomonadota</taxon>
        <taxon>Gammaproteobacteria</taxon>
        <taxon>Enterobacterales</taxon>
        <taxon>Enterobacteriaceae</taxon>
        <taxon>Escherichia</taxon>
    </lineage>
</organism>
<feature type="chain" id="PRO_1000124507" description="Transcriptional repressor NrdR">
    <location>
        <begin position="1"/>
        <end position="149"/>
    </location>
</feature>
<feature type="domain" description="ATP-cone" evidence="1">
    <location>
        <begin position="49"/>
        <end position="139"/>
    </location>
</feature>
<feature type="zinc finger region" evidence="1">
    <location>
        <begin position="3"/>
        <end position="34"/>
    </location>
</feature>
<sequence length="149" mass="17202">MHCPFCFAVDTKVIDSRLVGEGSSVRRRRQCLVCNERFTTFEVAELVMPRVVKSNDVREPFNEEKLRSGMLRALEKRPVSSDDVEMAISHIKSQLRATGEREVPSKMIGNLVMEQLKKLDKVAYIRFASVYRSFEDIKEFGEEIARLED</sequence>
<evidence type="ECO:0000255" key="1">
    <source>
        <dbReference type="HAMAP-Rule" id="MF_00440"/>
    </source>
</evidence>
<proteinExistence type="inferred from homology"/>
<protein>
    <recommendedName>
        <fullName evidence="1">Transcriptional repressor NrdR</fullName>
    </recommendedName>
</protein>
<reference key="1">
    <citation type="journal article" date="2009" name="PLoS Genet.">
        <title>Organised genome dynamics in the Escherichia coli species results in highly diverse adaptive paths.</title>
        <authorList>
            <person name="Touchon M."/>
            <person name="Hoede C."/>
            <person name="Tenaillon O."/>
            <person name="Barbe V."/>
            <person name="Baeriswyl S."/>
            <person name="Bidet P."/>
            <person name="Bingen E."/>
            <person name="Bonacorsi S."/>
            <person name="Bouchier C."/>
            <person name="Bouvet O."/>
            <person name="Calteau A."/>
            <person name="Chiapello H."/>
            <person name="Clermont O."/>
            <person name="Cruveiller S."/>
            <person name="Danchin A."/>
            <person name="Diard M."/>
            <person name="Dossat C."/>
            <person name="Karoui M.E."/>
            <person name="Frapy E."/>
            <person name="Garry L."/>
            <person name="Ghigo J.M."/>
            <person name="Gilles A.M."/>
            <person name="Johnson J."/>
            <person name="Le Bouguenec C."/>
            <person name="Lescat M."/>
            <person name="Mangenot S."/>
            <person name="Martinez-Jehanne V."/>
            <person name="Matic I."/>
            <person name="Nassif X."/>
            <person name="Oztas S."/>
            <person name="Petit M.A."/>
            <person name="Pichon C."/>
            <person name="Rouy Z."/>
            <person name="Ruf C.S."/>
            <person name="Schneider D."/>
            <person name="Tourret J."/>
            <person name="Vacherie B."/>
            <person name="Vallenet D."/>
            <person name="Medigue C."/>
            <person name="Rocha E.P.C."/>
            <person name="Denamur E."/>
        </authorList>
    </citation>
    <scope>NUCLEOTIDE SEQUENCE [LARGE SCALE GENOMIC DNA]</scope>
    <source>
        <strain>ATCC 35469 / DSM 13698 / BCRC 15582 / CCUG 18766 / IAM 14443 / JCM 21226 / LMG 7866 / NBRC 102419 / NCTC 12128 / CDC 0568-73</strain>
    </source>
</reference>
<name>NRDR_ESCF3</name>